<accession>C5BAD7</accession>
<evidence type="ECO:0000255" key="1">
    <source>
        <dbReference type="HAMAP-Rule" id="MF_00057"/>
    </source>
</evidence>
<proteinExistence type="inferred from homology"/>
<protein>
    <recommendedName>
        <fullName evidence="1">3-deoxy-manno-octulosonate cytidylyltransferase</fullName>
        <ecNumber evidence="1">2.7.7.38</ecNumber>
    </recommendedName>
    <alternativeName>
        <fullName evidence="1">CMP-2-keto-3-deoxyoctulosonic acid synthase</fullName>
        <shortName evidence="1">CKS</shortName>
        <shortName evidence="1">CMP-KDO synthase</shortName>
    </alternativeName>
</protein>
<reference key="1">
    <citation type="submission" date="2009-03" db="EMBL/GenBank/DDBJ databases">
        <title>Complete genome sequence of Edwardsiella ictaluri 93-146.</title>
        <authorList>
            <person name="Williams M.L."/>
            <person name="Gillaspy A.F."/>
            <person name="Dyer D.W."/>
            <person name="Thune R.L."/>
            <person name="Waldbieser G.C."/>
            <person name="Schuster S.C."/>
            <person name="Gipson J."/>
            <person name="Zaitshik J."/>
            <person name="Landry C."/>
            <person name="Lawrence M.L."/>
        </authorList>
    </citation>
    <scope>NUCLEOTIDE SEQUENCE [LARGE SCALE GENOMIC DNA]</scope>
    <source>
        <strain>93-146</strain>
    </source>
</reference>
<gene>
    <name evidence="1" type="primary">kdsB</name>
    <name type="ordered locus">NT01EI_2447</name>
</gene>
<dbReference type="EC" id="2.7.7.38" evidence="1"/>
<dbReference type="EMBL" id="CP001600">
    <property type="protein sequence ID" value="ACR69617.1"/>
    <property type="molecule type" value="Genomic_DNA"/>
</dbReference>
<dbReference type="RefSeq" id="WP_015871733.1">
    <property type="nucleotide sequence ID" value="NZ_CP169062.1"/>
</dbReference>
<dbReference type="SMR" id="C5BAD7"/>
<dbReference type="STRING" id="67780.B6E78_04375"/>
<dbReference type="GeneID" id="69539365"/>
<dbReference type="KEGG" id="eic:NT01EI_2447"/>
<dbReference type="PATRIC" id="fig|634503.3.peg.2170"/>
<dbReference type="HOGENOM" id="CLU_065038_1_0_6"/>
<dbReference type="OrthoDB" id="9815559at2"/>
<dbReference type="UniPathway" id="UPA00030"/>
<dbReference type="UniPathway" id="UPA00358">
    <property type="reaction ID" value="UER00476"/>
</dbReference>
<dbReference type="Proteomes" id="UP000001485">
    <property type="component" value="Chromosome"/>
</dbReference>
<dbReference type="GO" id="GO:0005829">
    <property type="term" value="C:cytosol"/>
    <property type="evidence" value="ECO:0007669"/>
    <property type="project" value="TreeGrafter"/>
</dbReference>
<dbReference type="GO" id="GO:0008690">
    <property type="term" value="F:3-deoxy-manno-octulosonate cytidylyltransferase activity"/>
    <property type="evidence" value="ECO:0007669"/>
    <property type="project" value="UniProtKB-UniRule"/>
</dbReference>
<dbReference type="GO" id="GO:0033468">
    <property type="term" value="P:CMP-keto-3-deoxy-D-manno-octulosonic acid biosynthetic process"/>
    <property type="evidence" value="ECO:0007669"/>
    <property type="project" value="UniProtKB-UniRule"/>
</dbReference>
<dbReference type="GO" id="GO:0009103">
    <property type="term" value="P:lipopolysaccharide biosynthetic process"/>
    <property type="evidence" value="ECO:0007669"/>
    <property type="project" value="UniProtKB-UniRule"/>
</dbReference>
<dbReference type="CDD" id="cd02517">
    <property type="entry name" value="CMP-KDO-Synthetase"/>
    <property type="match status" value="1"/>
</dbReference>
<dbReference type="FunFam" id="3.90.550.10:FF:000011">
    <property type="entry name" value="3-deoxy-manno-octulosonate cytidylyltransferase"/>
    <property type="match status" value="1"/>
</dbReference>
<dbReference type="Gene3D" id="3.90.550.10">
    <property type="entry name" value="Spore Coat Polysaccharide Biosynthesis Protein SpsA, Chain A"/>
    <property type="match status" value="1"/>
</dbReference>
<dbReference type="HAMAP" id="MF_00057">
    <property type="entry name" value="KdsB"/>
    <property type="match status" value="1"/>
</dbReference>
<dbReference type="InterPro" id="IPR003329">
    <property type="entry name" value="Cytidylyl_trans"/>
</dbReference>
<dbReference type="InterPro" id="IPR004528">
    <property type="entry name" value="KdsB"/>
</dbReference>
<dbReference type="InterPro" id="IPR029044">
    <property type="entry name" value="Nucleotide-diphossugar_trans"/>
</dbReference>
<dbReference type="NCBIfam" id="TIGR00466">
    <property type="entry name" value="kdsB"/>
    <property type="match status" value="1"/>
</dbReference>
<dbReference type="NCBIfam" id="NF003950">
    <property type="entry name" value="PRK05450.1-3"/>
    <property type="match status" value="1"/>
</dbReference>
<dbReference type="NCBIfam" id="NF003952">
    <property type="entry name" value="PRK05450.1-5"/>
    <property type="match status" value="1"/>
</dbReference>
<dbReference type="NCBIfam" id="NF009905">
    <property type="entry name" value="PRK13368.1"/>
    <property type="match status" value="1"/>
</dbReference>
<dbReference type="PANTHER" id="PTHR42866">
    <property type="entry name" value="3-DEOXY-MANNO-OCTULOSONATE CYTIDYLYLTRANSFERASE"/>
    <property type="match status" value="1"/>
</dbReference>
<dbReference type="PANTHER" id="PTHR42866:SF2">
    <property type="entry name" value="3-DEOXY-MANNO-OCTULOSONATE CYTIDYLYLTRANSFERASE, MITOCHONDRIAL"/>
    <property type="match status" value="1"/>
</dbReference>
<dbReference type="Pfam" id="PF02348">
    <property type="entry name" value="CTP_transf_3"/>
    <property type="match status" value="1"/>
</dbReference>
<dbReference type="SUPFAM" id="SSF53448">
    <property type="entry name" value="Nucleotide-diphospho-sugar transferases"/>
    <property type="match status" value="1"/>
</dbReference>
<sequence>MSFIAIIPSRYASTRLPGKPLADIAGKPMVVHVMAQAQASGAERVIVATDHPDVQHAVLQAGGEVCMTRADHNSGTERLAEVVELCGFADDDIIVNVQGDEPLIPPQIIRQVAENLARCDAGMATLAVPIHDAAEAFNPNAVKVVRDSQGYALYFSRAAIPWDRERFAVSQSQIGQTFLRHIGIYAYRAGFIRRYVNWAPSQLEQIEMLEQLRVLWYGEKIHVDVALQAPGTGVDTPEDLDCVRAILASQGQN</sequence>
<organism>
    <name type="scientific">Edwardsiella ictaluri (strain 93-146)</name>
    <dbReference type="NCBI Taxonomy" id="634503"/>
    <lineage>
        <taxon>Bacteria</taxon>
        <taxon>Pseudomonadati</taxon>
        <taxon>Pseudomonadota</taxon>
        <taxon>Gammaproteobacteria</taxon>
        <taxon>Enterobacterales</taxon>
        <taxon>Hafniaceae</taxon>
        <taxon>Edwardsiella</taxon>
    </lineage>
</organism>
<name>KDSB_EDWI9</name>
<keyword id="KW-0963">Cytoplasm</keyword>
<keyword id="KW-0448">Lipopolysaccharide biosynthesis</keyword>
<keyword id="KW-0548">Nucleotidyltransferase</keyword>
<keyword id="KW-0808">Transferase</keyword>
<feature type="chain" id="PRO_1000202341" description="3-deoxy-manno-octulosonate cytidylyltransferase">
    <location>
        <begin position="1"/>
        <end position="253"/>
    </location>
</feature>
<comment type="function">
    <text evidence="1">Activates KDO (a required 8-carbon sugar) for incorporation into bacterial lipopolysaccharide in Gram-negative bacteria.</text>
</comment>
<comment type="catalytic activity">
    <reaction evidence="1">
        <text>3-deoxy-alpha-D-manno-oct-2-ulosonate + CTP = CMP-3-deoxy-beta-D-manno-octulosonate + diphosphate</text>
        <dbReference type="Rhea" id="RHEA:23448"/>
        <dbReference type="ChEBI" id="CHEBI:33019"/>
        <dbReference type="ChEBI" id="CHEBI:37563"/>
        <dbReference type="ChEBI" id="CHEBI:85986"/>
        <dbReference type="ChEBI" id="CHEBI:85987"/>
        <dbReference type="EC" id="2.7.7.38"/>
    </reaction>
</comment>
<comment type="pathway">
    <text evidence="1">Nucleotide-sugar biosynthesis; CMP-3-deoxy-D-manno-octulosonate biosynthesis; CMP-3-deoxy-D-manno-octulosonate from 3-deoxy-D-manno-octulosonate and CTP: step 1/1.</text>
</comment>
<comment type="pathway">
    <text evidence="1">Bacterial outer membrane biogenesis; lipopolysaccharide biosynthesis.</text>
</comment>
<comment type="subcellular location">
    <subcellularLocation>
        <location evidence="1">Cytoplasm</location>
    </subcellularLocation>
</comment>
<comment type="similarity">
    <text evidence="1">Belongs to the KdsB family.</text>
</comment>